<accession>Q6A6P1</accession>
<name>RL6_CUTAK</name>
<evidence type="ECO:0000255" key="1">
    <source>
        <dbReference type="HAMAP-Rule" id="MF_01365"/>
    </source>
</evidence>
<evidence type="ECO:0000305" key="2"/>
<evidence type="ECO:0007829" key="3">
    <source>
        <dbReference type="PDB" id="8CVM"/>
    </source>
</evidence>
<feature type="chain" id="PRO_0000260916" description="Large ribosomal subunit protein uL6">
    <location>
        <begin position="1"/>
        <end position="180"/>
    </location>
</feature>
<feature type="helix" evidence="3">
    <location>
        <begin position="3"/>
        <end position="6"/>
    </location>
</feature>
<feature type="strand" evidence="3">
    <location>
        <begin position="16"/>
        <end position="20"/>
    </location>
</feature>
<feature type="strand" evidence="3">
    <location>
        <begin position="23"/>
        <end position="27"/>
    </location>
</feature>
<feature type="strand" evidence="3">
    <location>
        <begin position="32"/>
        <end position="36"/>
    </location>
</feature>
<feature type="strand" evidence="3">
    <location>
        <begin position="42"/>
        <end position="44"/>
    </location>
</feature>
<feature type="turn" evidence="3">
    <location>
        <begin position="46"/>
        <end position="49"/>
    </location>
</feature>
<feature type="strand" evidence="3">
    <location>
        <begin position="50"/>
        <end position="54"/>
    </location>
</feature>
<feature type="strand" evidence="3">
    <location>
        <begin position="56"/>
        <end position="59"/>
    </location>
</feature>
<feature type="helix" evidence="3">
    <location>
        <begin position="60"/>
        <end position="82"/>
    </location>
</feature>
<feature type="strand" evidence="3">
    <location>
        <begin position="84"/>
        <end position="92"/>
    </location>
</feature>
<feature type="strand" evidence="3">
    <location>
        <begin position="95"/>
        <end position="101"/>
    </location>
</feature>
<feature type="strand" evidence="3">
    <location>
        <begin position="104"/>
        <end position="113"/>
    </location>
</feature>
<feature type="strand" evidence="3">
    <location>
        <begin position="115"/>
        <end position="118"/>
    </location>
</feature>
<feature type="strand" evidence="3">
    <location>
        <begin position="123"/>
        <end position="129"/>
    </location>
</feature>
<feature type="strand" evidence="3">
    <location>
        <begin position="132"/>
        <end position="138"/>
    </location>
</feature>
<feature type="helix" evidence="3">
    <location>
        <begin position="140"/>
        <end position="153"/>
    </location>
</feature>
<feature type="turn" evidence="3">
    <location>
        <begin position="158"/>
        <end position="160"/>
    </location>
</feature>
<feature type="strand" evidence="3">
    <location>
        <begin position="163"/>
        <end position="166"/>
    </location>
</feature>
<sequence length="180" mass="19837">MSRIGRLPIAVPSGVEVKLDGQYVEVKGPKGTLNFTVREPITVSKNDEGAILVERPDDERENRSLHGLTRTLINNMVIGVTEGYEKKLEIQGVGYRVLSKGPKQLEFNLGFSHPVIVDAPEGITFAVENPTKFSVQGIDKQVVGETAANIRKIRKPEPYKGKGVRYEGENVRRKVGKAGK</sequence>
<dbReference type="EMBL" id="AE017283">
    <property type="protein sequence ID" value="AAT83572.1"/>
    <property type="molecule type" value="Genomic_DNA"/>
</dbReference>
<dbReference type="RefSeq" id="WP_002516006.1">
    <property type="nucleotide sequence ID" value="NZ_CP025935.1"/>
</dbReference>
<dbReference type="PDB" id="8CRX">
    <property type="method" value="EM"/>
    <property type="resolution" value="2.78 A"/>
    <property type="chains" value="g=1-180"/>
</dbReference>
<dbReference type="PDB" id="8CVM">
    <property type="method" value="EM"/>
    <property type="resolution" value="2.66 A"/>
    <property type="chains" value="g=1-180"/>
</dbReference>
<dbReference type="PDBsum" id="8CRX"/>
<dbReference type="PDBsum" id="8CVM"/>
<dbReference type="SMR" id="Q6A6P1"/>
<dbReference type="EnsemblBacteria" id="AAT83572">
    <property type="protein sequence ID" value="AAT83572"/>
    <property type="gene ID" value="PPA1846"/>
</dbReference>
<dbReference type="GeneID" id="92881195"/>
<dbReference type="KEGG" id="pac:PPA1846"/>
<dbReference type="eggNOG" id="COG0097">
    <property type="taxonomic scope" value="Bacteria"/>
</dbReference>
<dbReference type="HOGENOM" id="CLU_065464_1_2_11"/>
<dbReference type="Proteomes" id="UP000000603">
    <property type="component" value="Chromosome"/>
</dbReference>
<dbReference type="GO" id="GO:0022625">
    <property type="term" value="C:cytosolic large ribosomal subunit"/>
    <property type="evidence" value="ECO:0007669"/>
    <property type="project" value="TreeGrafter"/>
</dbReference>
<dbReference type="GO" id="GO:0019843">
    <property type="term" value="F:rRNA binding"/>
    <property type="evidence" value="ECO:0007669"/>
    <property type="project" value="UniProtKB-UniRule"/>
</dbReference>
<dbReference type="GO" id="GO:0003735">
    <property type="term" value="F:structural constituent of ribosome"/>
    <property type="evidence" value="ECO:0007669"/>
    <property type="project" value="InterPro"/>
</dbReference>
<dbReference type="GO" id="GO:0002181">
    <property type="term" value="P:cytoplasmic translation"/>
    <property type="evidence" value="ECO:0007669"/>
    <property type="project" value="TreeGrafter"/>
</dbReference>
<dbReference type="FunFam" id="3.90.930.12:FF:000001">
    <property type="entry name" value="50S ribosomal protein L6"/>
    <property type="match status" value="1"/>
</dbReference>
<dbReference type="FunFam" id="3.90.930.12:FF:000002">
    <property type="entry name" value="50S ribosomal protein L6"/>
    <property type="match status" value="1"/>
</dbReference>
<dbReference type="Gene3D" id="3.90.930.12">
    <property type="entry name" value="Ribosomal protein L6, alpha-beta domain"/>
    <property type="match status" value="2"/>
</dbReference>
<dbReference type="HAMAP" id="MF_01365_B">
    <property type="entry name" value="Ribosomal_uL6_B"/>
    <property type="match status" value="1"/>
</dbReference>
<dbReference type="InterPro" id="IPR000702">
    <property type="entry name" value="Ribosomal_uL6-like"/>
</dbReference>
<dbReference type="InterPro" id="IPR036789">
    <property type="entry name" value="Ribosomal_uL6-like_a/b-dom_sf"/>
</dbReference>
<dbReference type="InterPro" id="IPR020040">
    <property type="entry name" value="Ribosomal_uL6_a/b-dom"/>
</dbReference>
<dbReference type="InterPro" id="IPR019906">
    <property type="entry name" value="Ribosomal_uL6_bac-type"/>
</dbReference>
<dbReference type="InterPro" id="IPR002358">
    <property type="entry name" value="Ribosomal_uL6_CS"/>
</dbReference>
<dbReference type="NCBIfam" id="TIGR03654">
    <property type="entry name" value="L6_bact"/>
    <property type="match status" value="1"/>
</dbReference>
<dbReference type="PANTHER" id="PTHR11655">
    <property type="entry name" value="60S/50S RIBOSOMAL PROTEIN L6/L9"/>
    <property type="match status" value="1"/>
</dbReference>
<dbReference type="PANTHER" id="PTHR11655:SF14">
    <property type="entry name" value="LARGE RIBOSOMAL SUBUNIT PROTEIN UL6M"/>
    <property type="match status" value="1"/>
</dbReference>
<dbReference type="Pfam" id="PF00347">
    <property type="entry name" value="Ribosomal_L6"/>
    <property type="match status" value="2"/>
</dbReference>
<dbReference type="PIRSF" id="PIRSF002162">
    <property type="entry name" value="Ribosomal_L6"/>
    <property type="match status" value="1"/>
</dbReference>
<dbReference type="PRINTS" id="PR00059">
    <property type="entry name" value="RIBOSOMALL6"/>
</dbReference>
<dbReference type="SUPFAM" id="SSF56053">
    <property type="entry name" value="Ribosomal protein L6"/>
    <property type="match status" value="2"/>
</dbReference>
<dbReference type="PROSITE" id="PS00525">
    <property type="entry name" value="RIBOSOMAL_L6_1"/>
    <property type="match status" value="1"/>
</dbReference>
<gene>
    <name evidence="1" type="primary">rplF</name>
    <name type="ordered locus">PPA1846</name>
</gene>
<keyword id="KW-0002">3D-structure</keyword>
<keyword id="KW-0687">Ribonucleoprotein</keyword>
<keyword id="KW-0689">Ribosomal protein</keyword>
<keyword id="KW-0694">RNA-binding</keyword>
<keyword id="KW-0699">rRNA-binding</keyword>
<protein>
    <recommendedName>
        <fullName evidence="1">Large ribosomal subunit protein uL6</fullName>
    </recommendedName>
    <alternativeName>
        <fullName evidence="2">50S ribosomal protein L6</fullName>
    </alternativeName>
</protein>
<reference key="1">
    <citation type="journal article" date="2004" name="Science">
        <title>The complete genome sequence of Propionibacterium acnes, a commensal of human skin.</title>
        <authorList>
            <person name="Brueggemann H."/>
            <person name="Henne A."/>
            <person name="Hoster F."/>
            <person name="Liesegang H."/>
            <person name="Wiezer A."/>
            <person name="Strittmatter A."/>
            <person name="Hujer S."/>
            <person name="Duerre P."/>
            <person name="Gottschalk G."/>
        </authorList>
    </citation>
    <scope>NUCLEOTIDE SEQUENCE [LARGE SCALE GENOMIC DNA]</scope>
    <source>
        <strain>DSM 16379 / KPA171202</strain>
    </source>
</reference>
<proteinExistence type="evidence at protein level"/>
<organism>
    <name type="scientific">Cutibacterium acnes (strain DSM 16379 / KPA171202)</name>
    <name type="common">Propionibacterium acnes</name>
    <dbReference type="NCBI Taxonomy" id="267747"/>
    <lineage>
        <taxon>Bacteria</taxon>
        <taxon>Bacillati</taxon>
        <taxon>Actinomycetota</taxon>
        <taxon>Actinomycetes</taxon>
        <taxon>Propionibacteriales</taxon>
        <taxon>Propionibacteriaceae</taxon>
        <taxon>Cutibacterium</taxon>
    </lineage>
</organism>
<comment type="function">
    <text evidence="1">This protein binds to the 23S rRNA, and is important in its secondary structure. It is located near the subunit interface in the base of the L7/L12 stalk, and near the tRNA binding site of the peptidyltransferase center.</text>
</comment>
<comment type="subunit">
    <text evidence="1">Part of the 50S ribosomal subunit.</text>
</comment>
<comment type="similarity">
    <text evidence="1">Belongs to the universal ribosomal protein uL6 family.</text>
</comment>